<feature type="chain" id="PRO_0000080566" description="Dol-P-Man:Man(5)GlcNAc(2)-PP-Dol alpha-1,3-mannosyltransferase">
    <location>
        <begin position="1"/>
        <end position="438"/>
    </location>
</feature>
<feature type="transmembrane region" description="Helical" evidence="1">
    <location>
        <begin position="41"/>
        <end position="61"/>
    </location>
</feature>
<feature type="transmembrane region" description="Helical" evidence="1">
    <location>
        <begin position="95"/>
        <end position="115"/>
    </location>
</feature>
<feature type="transmembrane region" description="Helical" evidence="1">
    <location>
        <begin position="123"/>
        <end position="143"/>
    </location>
</feature>
<feature type="transmembrane region" description="Helical" evidence="1">
    <location>
        <begin position="149"/>
        <end position="169"/>
    </location>
</feature>
<feature type="transmembrane region" description="Helical" evidence="1">
    <location>
        <begin position="172"/>
        <end position="192"/>
    </location>
</feature>
<feature type="transmembrane region" description="Helical" evidence="1">
    <location>
        <begin position="203"/>
        <end position="223"/>
    </location>
</feature>
<feature type="transmembrane region" description="Helical" evidence="1">
    <location>
        <begin position="231"/>
        <end position="251"/>
    </location>
</feature>
<feature type="transmembrane region" description="Helical" evidence="1">
    <location>
        <begin position="289"/>
        <end position="309"/>
    </location>
</feature>
<feature type="transmembrane region" description="Helical" evidence="1">
    <location>
        <begin position="332"/>
        <end position="352"/>
    </location>
</feature>
<feature type="transmembrane region" description="Helical" evidence="1">
    <location>
        <begin position="356"/>
        <end position="376"/>
    </location>
</feature>
<feature type="transmembrane region" description="Helical" evidence="1">
    <location>
        <begin position="407"/>
        <end position="427"/>
    </location>
</feature>
<feature type="modified residue" description="Phosphoserine" evidence="9">
    <location>
        <position position="13"/>
    </location>
</feature>
<feature type="splice variant" id="VSP_042738" description="In isoform 2." evidence="4">
    <original>MAAGLRKRGRSGSAAQAEGLCKQWLQRAWQERRLLLREPRYTLLVAACLCLAEVGITFWVIHRVAY</original>
    <variation>MFPAQAKENAGFSGCGGD</variation>
    <location>
        <begin position="1"/>
        <end position="66"/>
    </location>
</feature>
<feature type="sequence variant" id="VAR_037805" description="In dbSNP:rs2233463.">
    <original>I</original>
    <variation>V</variation>
    <location>
        <position position="107"/>
    </location>
</feature>
<feature type="sequence variant" id="VAR_010306" description="In CDG1D; loss of dol-P-Man:Man(5)GlcNAc(2)-PP-Dol alpha-1,3-mannosyltransferase activity; dbSNP:rs28940588." evidence="2">
    <original>G</original>
    <variation>D</variation>
    <location>
        <position position="118"/>
    </location>
</feature>
<feature type="sequence variant" id="VAR_037806" description="In CDG1D; dbSNP:rs119103236." evidence="3">
    <original>R</original>
    <variation>Q</variation>
    <location>
        <position position="171"/>
    </location>
</feature>
<evidence type="ECO:0000255" key="1"/>
<evidence type="ECO:0000269" key="2">
    <source>
    </source>
</evidence>
<evidence type="ECO:0000269" key="3">
    <source>
    </source>
</evidence>
<evidence type="ECO:0000303" key="4">
    <source>
    </source>
</evidence>
<evidence type="ECO:0000305" key="5"/>
<evidence type="ECO:0000305" key="6">
    <source>
    </source>
</evidence>
<evidence type="ECO:0000312" key="7">
    <source>
        <dbReference type="EMBL" id="CAA70220.1"/>
    </source>
</evidence>
<evidence type="ECO:0000312" key="8">
    <source>
        <dbReference type="HGNC" id="HGNC:23056"/>
    </source>
</evidence>
<evidence type="ECO:0007744" key="9">
    <source>
    </source>
</evidence>
<accession>Q92685</accession>
<accession>A8JZZ6</accession>
<accession>Q9BT71</accession>
<name>ALG3_HUMAN</name>
<sequence>MAAGLRKRGRSGSAAQAEGLCKQWLQRAWQERRLLLREPRYTLLVAACLCLAEVGITFWVIHRVAYTEIDWKAYMAEVEGVINGTYDYTQLQGDTGPLVYPAGFVYIFMGLYYATSRGTDIRMAQNIFAVLYLATLLLVFLIYHQTCKVPPFVFFFMCCASYRVHSIFVLRLFNDPVAMVLLFLSINLLLAQRWGWGCCFFSLAVSVKMNVLLFAPGLLFLLLTQFGFRGALPKLGICAGLQVVLGLPFLLENPSGYLSRSFDLGRQFLFHWTVNWRFLPEALFLHRAFHLALLTAHLTLLLLFALCRWHRTGESILSLLRDPSKRKVPPQPLTPNQIVSTLFTSNFIGICFSRSLHYQFYVWYFHTLPYLLWAMPARWLTHLLRLLVLGLIELSWNTYPSTSCSSAALHICHAVILLQLWLGPQPFPKSTQHSKKAH</sequence>
<keyword id="KW-0025">Alternative splicing</keyword>
<keyword id="KW-0900">Congenital disorder of glycosylation</keyword>
<keyword id="KW-0225">Disease variant</keyword>
<keyword id="KW-0256">Endoplasmic reticulum</keyword>
<keyword id="KW-0328">Glycosyltransferase</keyword>
<keyword id="KW-0472">Membrane</keyword>
<keyword id="KW-0597">Phosphoprotein</keyword>
<keyword id="KW-1267">Proteomics identification</keyword>
<keyword id="KW-1185">Reference proteome</keyword>
<keyword id="KW-0808">Transferase</keyword>
<keyword id="KW-0812">Transmembrane</keyword>
<keyword id="KW-1133">Transmembrane helix</keyword>
<dbReference type="EC" id="2.4.1.258" evidence="2"/>
<dbReference type="EMBL" id="Y09022">
    <property type="protein sequence ID" value="CAA70220.1"/>
    <property type="molecule type" value="mRNA"/>
</dbReference>
<dbReference type="EMBL" id="AK289361">
    <property type="protein sequence ID" value="BAF82050.1"/>
    <property type="molecule type" value="mRNA"/>
</dbReference>
<dbReference type="EMBL" id="AC061705">
    <property type="status" value="NOT_ANNOTATED_CDS"/>
    <property type="molecule type" value="Genomic_DNA"/>
</dbReference>
<dbReference type="EMBL" id="BC002839">
    <property type="protein sequence ID" value="AAH02839.1"/>
    <property type="molecule type" value="mRNA"/>
</dbReference>
<dbReference type="EMBL" id="BC004313">
    <property type="protein sequence ID" value="AAH04313.1"/>
    <property type="molecule type" value="mRNA"/>
</dbReference>
<dbReference type="CCDS" id="CCDS46967.1">
    <molecule id="Q92685-2"/>
</dbReference>
<dbReference type="CCDS" id="CCDS46968.1">
    <molecule id="Q92685-1"/>
</dbReference>
<dbReference type="RefSeq" id="NP_001006942.1">
    <molecule id="Q92685-2"/>
    <property type="nucleotide sequence ID" value="NM_001006941.2"/>
</dbReference>
<dbReference type="RefSeq" id="NP_005778.1">
    <molecule id="Q92685-1"/>
    <property type="nucleotide sequence ID" value="NM_005787.6"/>
</dbReference>
<dbReference type="BioGRID" id="115490">
    <property type="interactions" value="55"/>
</dbReference>
<dbReference type="FunCoup" id="Q92685">
    <property type="interactions" value="1603"/>
</dbReference>
<dbReference type="IntAct" id="Q92685">
    <property type="interactions" value="59"/>
</dbReference>
<dbReference type="MINT" id="Q92685"/>
<dbReference type="STRING" id="9606.ENSP00000380793"/>
<dbReference type="CAZy" id="GT58">
    <property type="family name" value="Glycosyltransferase Family 58"/>
</dbReference>
<dbReference type="iPTMnet" id="Q92685"/>
<dbReference type="PhosphoSitePlus" id="Q92685"/>
<dbReference type="SwissPalm" id="Q92685"/>
<dbReference type="BioMuta" id="ALG3"/>
<dbReference type="DMDM" id="3024226"/>
<dbReference type="jPOST" id="Q92685"/>
<dbReference type="MassIVE" id="Q92685"/>
<dbReference type="PaxDb" id="9606-ENSP00000380793"/>
<dbReference type="PeptideAtlas" id="Q92685"/>
<dbReference type="ProteomicsDB" id="75406">
    <molecule id="Q92685-1"/>
</dbReference>
<dbReference type="ProteomicsDB" id="75407">
    <molecule id="Q92685-2"/>
</dbReference>
<dbReference type="Pumba" id="Q92685"/>
<dbReference type="Antibodypedia" id="52417">
    <property type="antibodies" value="15 antibodies from 11 providers"/>
</dbReference>
<dbReference type="DNASU" id="10195"/>
<dbReference type="Ensembl" id="ENST00000397676.8">
    <molecule id="Q92685-1"/>
    <property type="protein sequence ID" value="ENSP00000380793.3"/>
    <property type="gene ID" value="ENSG00000214160.10"/>
</dbReference>
<dbReference type="Ensembl" id="ENST00000445626.6">
    <molecule id="Q92685-2"/>
    <property type="protein sequence ID" value="ENSP00000402744.2"/>
    <property type="gene ID" value="ENSG00000214160.10"/>
</dbReference>
<dbReference type="GeneID" id="10195"/>
<dbReference type="KEGG" id="hsa:10195"/>
<dbReference type="MANE-Select" id="ENST00000397676.8">
    <property type="protein sequence ID" value="ENSP00000380793.3"/>
    <property type="RefSeq nucleotide sequence ID" value="NM_005787.6"/>
    <property type="RefSeq protein sequence ID" value="NP_005778.1"/>
</dbReference>
<dbReference type="UCSC" id="uc003fne.3">
    <molecule id="Q92685-1"/>
    <property type="organism name" value="human"/>
</dbReference>
<dbReference type="AGR" id="HGNC:23056"/>
<dbReference type="CTD" id="10195"/>
<dbReference type="DisGeNET" id="10195"/>
<dbReference type="GeneCards" id="ALG3"/>
<dbReference type="GeneReviews" id="ALG3"/>
<dbReference type="HGNC" id="HGNC:23056">
    <property type="gene designation" value="ALG3"/>
</dbReference>
<dbReference type="HPA" id="ENSG00000214160">
    <property type="expression patterns" value="Low tissue specificity"/>
</dbReference>
<dbReference type="MalaCards" id="ALG3"/>
<dbReference type="MIM" id="601110">
    <property type="type" value="phenotype"/>
</dbReference>
<dbReference type="MIM" id="608750">
    <property type="type" value="gene"/>
</dbReference>
<dbReference type="neXtProt" id="NX_Q92685"/>
<dbReference type="OpenTargets" id="ENSG00000214160"/>
<dbReference type="Orphanet" id="79321">
    <property type="disease" value="ALG3-CDG"/>
</dbReference>
<dbReference type="PharmGKB" id="PA134897460"/>
<dbReference type="VEuPathDB" id="HostDB:ENSG00000214160"/>
<dbReference type="eggNOG" id="KOG2762">
    <property type="taxonomic scope" value="Eukaryota"/>
</dbReference>
<dbReference type="GeneTree" id="ENSGT00390000013904"/>
<dbReference type="InParanoid" id="Q92685"/>
<dbReference type="OMA" id="PERYGIH"/>
<dbReference type="OrthoDB" id="20028at2759"/>
<dbReference type="PAN-GO" id="Q92685">
    <property type="GO annotations" value="3 GO annotations based on evolutionary models"/>
</dbReference>
<dbReference type="PhylomeDB" id="Q92685"/>
<dbReference type="TreeFam" id="TF105870"/>
<dbReference type="BRENDA" id="2.4.1.258">
    <property type="organism ID" value="2681"/>
</dbReference>
<dbReference type="PathwayCommons" id="Q92685"/>
<dbReference type="Reactome" id="R-HSA-446193">
    <property type="pathway name" value="Biosynthesis of the N-glycan precursor (dolichol lipid-linked oligosaccharide, LLO) and transfer to a nascent protein"/>
</dbReference>
<dbReference type="Reactome" id="R-HSA-4720475">
    <property type="pathway name" value="Defective ALG3 causes CDG-1d"/>
</dbReference>
<dbReference type="SignaLink" id="Q92685"/>
<dbReference type="UniPathway" id="UPA00378"/>
<dbReference type="BioGRID-ORCS" id="10195">
    <property type="hits" value="38 hits in 1168 CRISPR screens"/>
</dbReference>
<dbReference type="ChiTaRS" id="ALG3">
    <property type="organism name" value="human"/>
</dbReference>
<dbReference type="GeneWiki" id="ALG3"/>
<dbReference type="GenomeRNAi" id="10195"/>
<dbReference type="Pharos" id="Q92685">
    <property type="development level" value="Tbio"/>
</dbReference>
<dbReference type="PRO" id="PR:Q92685"/>
<dbReference type="Proteomes" id="UP000005640">
    <property type="component" value="Chromosome 3"/>
</dbReference>
<dbReference type="RNAct" id="Q92685">
    <property type="molecule type" value="protein"/>
</dbReference>
<dbReference type="Bgee" id="ENSG00000214160">
    <property type="expression patterns" value="Expressed in mucosa of transverse colon and 130 other cell types or tissues"/>
</dbReference>
<dbReference type="ExpressionAtlas" id="Q92685">
    <property type="expression patterns" value="baseline and differential"/>
</dbReference>
<dbReference type="GO" id="GO:0005783">
    <property type="term" value="C:endoplasmic reticulum"/>
    <property type="evidence" value="ECO:0000318"/>
    <property type="project" value="GO_Central"/>
</dbReference>
<dbReference type="GO" id="GO:0005789">
    <property type="term" value="C:endoplasmic reticulum membrane"/>
    <property type="evidence" value="ECO:0000314"/>
    <property type="project" value="UniProtKB"/>
</dbReference>
<dbReference type="GO" id="GO:0098553">
    <property type="term" value="C:lumenal side of endoplasmic reticulum membrane"/>
    <property type="evidence" value="ECO:0000305"/>
    <property type="project" value="UniProt"/>
</dbReference>
<dbReference type="GO" id="GO:0000033">
    <property type="term" value="F:alpha-1,3-mannosyltransferase activity"/>
    <property type="evidence" value="ECO:0000304"/>
    <property type="project" value="Reactome"/>
</dbReference>
<dbReference type="GO" id="GO:0052925">
    <property type="term" value="F:dol-P-Man:Man(5)GlcNAc(2)-PP-Dol alpha-1,3-mannosyltransferase activity"/>
    <property type="evidence" value="ECO:0000314"/>
    <property type="project" value="UniProtKB"/>
</dbReference>
<dbReference type="GO" id="GO:0006488">
    <property type="term" value="P:dolichol-linked oligosaccharide biosynthetic process"/>
    <property type="evidence" value="ECO:0000314"/>
    <property type="project" value="UniProtKB"/>
</dbReference>
<dbReference type="GO" id="GO:0006486">
    <property type="term" value="P:protein glycosylation"/>
    <property type="evidence" value="ECO:0000318"/>
    <property type="project" value="GO_Central"/>
</dbReference>
<dbReference type="GO" id="GO:0006487">
    <property type="term" value="P:protein N-linked glycosylation"/>
    <property type="evidence" value="ECO:0000314"/>
    <property type="project" value="UniProtKB"/>
</dbReference>
<dbReference type="InterPro" id="IPR007873">
    <property type="entry name" value="Glycosyltransferase_ALG3"/>
</dbReference>
<dbReference type="PANTHER" id="PTHR12646:SF0">
    <property type="entry name" value="DOL-P-MAN:MAN(5)GLCNAC(2)-PP-DOL ALPHA-1,3-MANNOSYLTRANSFERASE"/>
    <property type="match status" value="1"/>
</dbReference>
<dbReference type="PANTHER" id="PTHR12646">
    <property type="entry name" value="NOT56 - RELATED"/>
    <property type="match status" value="1"/>
</dbReference>
<dbReference type="Pfam" id="PF05208">
    <property type="entry name" value="ALG3"/>
    <property type="match status" value="1"/>
</dbReference>
<reference key="1">
    <citation type="submission" date="1996-10" db="EMBL/GenBank/DDBJ databases">
        <title>Sequence of the human homologue of the Drosophila melanogaster Not56 protein and its expression in various tissues.</title>
        <authorList>
            <person name="Kurzik-Dumke U."/>
            <person name="Kaymer M."/>
        </authorList>
    </citation>
    <scope>NUCLEOTIDE SEQUENCE [MRNA] (ISOFORM 1)</scope>
    <source>
        <tissue>Brain</tissue>
    </source>
</reference>
<reference key="2">
    <citation type="journal article" date="2004" name="Nat. Genet.">
        <title>Complete sequencing and characterization of 21,243 full-length human cDNAs.</title>
        <authorList>
            <person name="Ota T."/>
            <person name="Suzuki Y."/>
            <person name="Nishikawa T."/>
            <person name="Otsuki T."/>
            <person name="Sugiyama T."/>
            <person name="Irie R."/>
            <person name="Wakamatsu A."/>
            <person name="Hayashi K."/>
            <person name="Sato H."/>
            <person name="Nagai K."/>
            <person name="Kimura K."/>
            <person name="Makita H."/>
            <person name="Sekine M."/>
            <person name="Obayashi M."/>
            <person name="Nishi T."/>
            <person name="Shibahara T."/>
            <person name="Tanaka T."/>
            <person name="Ishii S."/>
            <person name="Yamamoto J."/>
            <person name="Saito K."/>
            <person name="Kawai Y."/>
            <person name="Isono Y."/>
            <person name="Nakamura Y."/>
            <person name="Nagahari K."/>
            <person name="Murakami K."/>
            <person name="Yasuda T."/>
            <person name="Iwayanagi T."/>
            <person name="Wagatsuma M."/>
            <person name="Shiratori A."/>
            <person name="Sudo H."/>
            <person name="Hosoiri T."/>
            <person name="Kaku Y."/>
            <person name="Kodaira H."/>
            <person name="Kondo H."/>
            <person name="Sugawara M."/>
            <person name="Takahashi M."/>
            <person name="Kanda K."/>
            <person name="Yokoi T."/>
            <person name="Furuya T."/>
            <person name="Kikkawa E."/>
            <person name="Omura Y."/>
            <person name="Abe K."/>
            <person name="Kamihara K."/>
            <person name="Katsuta N."/>
            <person name="Sato K."/>
            <person name="Tanikawa M."/>
            <person name="Yamazaki M."/>
            <person name="Ninomiya K."/>
            <person name="Ishibashi T."/>
            <person name="Yamashita H."/>
            <person name="Murakawa K."/>
            <person name="Fujimori K."/>
            <person name="Tanai H."/>
            <person name="Kimata M."/>
            <person name="Watanabe M."/>
            <person name="Hiraoka S."/>
            <person name="Chiba Y."/>
            <person name="Ishida S."/>
            <person name="Ono Y."/>
            <person name="Takiguchi S."/>
            <person name="Watanabe S."/>
            <person name="Yosida M."/>
            <person name="Hotuta T."/>
            <person name="Kusano J."/>
            <person name="Kanehori K."/>
            <person name="Takahashi-Fujii A."/>
            <person name="Hara H."/>
            <person name="Tanase T.-O."/>
            <person name="Nomura Y."/>
            <person name="Togiya S."/>
            <person name="Komai F."/>
            <person name="Hara R."/>
            <person name="Takeuchi K."/>
            <person name="Arita M."/>
            <person name="Imose N."/>
            <person name="Musashino K."/>
            <person name="Yuuki H."/>
            <person name="Oshima A."/>
            <person name="Sasaki N."/>
            <person name="Aotsuka S."/>
            <person name="Yoshikawa Y."/>
            <person name="Matsunawa H."/>
            <person name="Ichihara T."/>
            <person name="Shiohata N."/>
            <person name="Sano S."/>
            <person name="Moriya S."/>
            <person name="Momiyama H."/>
            <person name="Satoh N."/>
            <person name="Takami S."/>
            <person name="Terashima Y."/>
            <person name="Suzuki O."/>
            <person name="Nakagawa S."/>
            <person name="Senoh A."/>
            <person name="Mizoguchi H."/>
            <person name="Goto Y."/>
            <person name="Shimizu F."/>
            <person name="Wakebe H."/>
            <person name="Hishigaki H."/>
            <person name="Watanabe T."/>
            <person name="Sugiyama A."/>
            <person name="Takemoto M."/>
            <person name="Kawakami B."/>
            <person name="Yamazaki M."/>
            <person name="Watanabe K."/>
            <person name="Kumagai A."/>
            <person name="Itakura S."/>
            <person name="Fukuzumi Y."/>
            <person name="Fujimori Y."/>
            <person name="Komiyama M."/>
            <person name="Tashiro H."/>
            <person name="Tanigami A."/>
            <person name="Fujiwara T."/>
            <person name="Ono T."/>
            <person name="Yamada K."/>
            <person name="Fujii Y."/>
            <person name="Ozaki K."/>
            <person name="Hirao M."/>
            <person name="Ohmori Y."/>
            <person name="Kawabata A."/>
            <person name="Hikiji T."/>
            <person name="Kobatake N."/>
            <person name="Inagaki H."/>
            <person name="Ikema Y."/>
            <person name="Okamoto S."/>
            <person name="Okitani R."/>
            <person name="Kawakami T."/>
            <person name="Noguchi S."/>
            <person name="Itoh T."/>
            <person name="Shigeta K."/>
            <person name="Senba T."/>
            <person name="Matsumura K."/>
            <person name="Nakajima Y."/>
            <person name="Mizuno T."/>
            <person name="Morinaga M."/>
            <person name="Sasaki M."/>
            <person name="Togashi T."/>
            <person name="Oyama M."/>
            <person name="Hata H."/>
            <person name="Watanabe M."/>
            <person name="Komatsu T."/>
            <person name="Mizushima-Sugano J."/>
            <person name="Satoh T."/>
            <person name="Shirai Y."/>
            <person name="Takahashi Y."/>
            <person name="Nakagawa K."/>
            <person name="Okumura K."/>
            <person name="Nagase T."/>
            <person name="Nomura N."/>
            <person name="Kikuchi H."/>
            <person name="Masuho Y."/>
            <person name="Yamashita R."/>
            <person name="Nakai K."/>
            <person name="Yada T."/>
            <person name="Nakamura Y."/>
            <person name="Ohara O."/>
            <person name="Isogai T."/>
            <person name="Sugano S."/>
        </authorList>
    </citation>
    <scope>NUCLEOTIDE SEQUENCE [LARGE SCALE MRNA] (ISOFORM 2)</scope>
</reference>
<reference key="3">
    <citation type="journal article" date="2006" name="Nature">
        <title>The DNA sequence, annotation and analysis of human chromosome 3.</title>
        <authorList>
            <person name="Muzny D.M."/>
            <person name="Scherer S.E."/>
            <person name="Kaul R."/>
            <person name="Wang J."/>
            <person name="Yu J."/>
            <person name="Sudbrak R."/>
            <person name="Buhay C.J."/>
            <person name="Chen R."/>
            <person name="Cree A."/>
            <person name="Ding Y."/>
            <person name="Dugan-Rocha S."/>
            <person name="Gill R."/>
            <person name="Gunaratne P."/>
            <person name="Harris R.A."/>
            <person name="Hawes A.C."/>
            <person name="Hernandez J."/>
            <person name="Hodgson A.V."/>
            <person name="Hume J."/>
            <person name="Jackson A."/>
            <person name="Khan Z.M."/>
            <person name="Kovar-Smith C."/>
            <person name="Lewis L.R."/>
            <person name="Lozado R.J."/>
            <person name="Metzker M.L."/>
            <person name="Milosavljevic A."/>
            <person name="Miner G.R."/>
            <person name="Morgan M.B."/>
            <person name="Nazareth L.V."/>
            <person name="Scott G."/>
            <person name="Sodergren E."/>
            <person name="Song X.-Z."/>
            <person name="Steffen D."/>
            <person name="Wei S."/>
            <person name="Wheeler D.A."/>
            <person name="Wright M.W."/>
            <person name="Worley K.C."/>
            <person name="Yuan Y."/>
            <person name="Zhang Z."/>
            <person name="Adams C.Q."/>
            <person name="Ansari-Lari M.A."/>
            <person name="Ayele M."/>
            <person name="Brown M.J."/>
            <person name="Chen G."/>
            <person name="Chen Z."/>
            <person name="Clendenning J."/>
            <person name="Clerc-Blankenburg K.P."/>
            <person name="Chen R."/>
            <person name="Chen Z."/>
            <person name="Davis C."/>
            <person name="Delgado O."/>
            <person name="Dinh H.H."/>
            <person name="Dong W."/>
            <person name="Draper H."/>
            <person name="Ernst S."/>
            <person name="Fu G."/>
            <person name="Gonzalez-Garay M.L."/>
            <person name="Garcia D.K."/>
            <person name="Gillett W."/>
            <person name="Gu J."/>
            <person name="Hao B."/>
            <person name="Haugen E."/>
            <person name="Havlak P."/>
            <person name="He X."/>
            <person name="Hennig S."/>
            <person name="Hu S."/>
            <person name="Huang W."/>
            <person name="Jackson L.R."/>
            <person name="Jacob L.S."/>
            <person name="Kelly S.H."/>
            <person name="Kube M."/>
            <person name="Levy R."/>
            <person name="Li Z."/>
            <person name="Liu B."/>
            <person name="Liu J."/>
            <person name="Liu W."/>
            <person name="Lu J."/>
            <person name="Maheshwari M."/>
            <person name="Nguyen B.-V."/>
            <person name="Okwuonu G.O."/>
            <person name="Palmeiri A."/>
            <person name="Pasternak S."/>
            <person name="Perez L.M."/>
            <person name="Phelps K.A."/>
            <person name="Plopper F.J."/>
            <person name="Qiang B."/>
            <person name="Raymond C."/>
            <person name="Rodriguez R."/>
            <person name="Saenphimmachak C."/>
            <person name="Santibanez J."/>
            <person name="Shen H."/>
            <person name="Shen Y."/>
            <person name="Subramanian S."/>
            <person name="Tabor P.E."/>
            <person name="Verduzco D."/>
            <person name="Waldron L."/>
            <person name="Wang J."/>
            <person name="Wang J."/>
            <person name="Wang Q."/>
            <person name="Williams G.A."/>
            <person name="Wong G.K.-S."/>
            <person name="Yao Z."/>
            <person name="Zhang J."/>
            <person name="Zhang X."/>
            <person name="Zhao G."/>
            <person name="Zhou J."/>
            <person name="Zhou Y."/>
            <person name="Nelson D."/>
            <person name="Lehrach H."/>
            <person name="Reinhardt R."/>
            <person name="Naylor S.L."/>
            <person name="Yang H."/>
            <person name="Olson M."/>
            <person name="Weinstock G."/>
            <person name="Gibbs R.A."/>
        </authorList>
    </citation>
    <scope>NUCLEOTIDE SEQUENCE [LARGE SCALE GENOMIC DNA]</scope>
</reference>
<reference key="4">
    <citation type="journal article" date="2004" name="Genome Res.">
        <title>The status, quality, and expansion of the NIH full-length cDNA project: the Mammalian Gene Collection (MGC).</title>
        <authorList>
            <consortium name="The MGC Project Team"/>
        </authorList>
    </citation>
    <scope>NUCLEOTIDE SEQUENCE [LARGE SCALE MRNA] (ISOFORM 1)</scope>
    <source>
        <tissue>Brain</tissue>
        <tissue>Placenta</tissue>
    </source>
</reference>
<reference key="5">
    <citation type="journal article" date="1999" name="EMBO J.">
        <title>Carbohydrate deficient glycoprotein syndrome type IV: deficiency of dolichyl-P-Man:Man(5)GlcNAc(2)-PP-dolichyl mannosyltransferase.</title>
        <authorList>
            <person name="Koerner C."/>
            <person name="Knauer R."/>
            <person name="Stephani U."/>
            <person name="Marquardt T."/>
            <person name="Lehle L."/>
            <person name="von Figura K."/>
        </authorList>
    </citation>
    <scope>FUNCTION</scope>
    <scope>CATALYTIC ACTIVITY</scope>
    <scope>PATHWAY</scope>
    <scope>SUBCELLULAR LOCATION</scope>
    <scope>INVOLVEMENT IN CDG1D</scope>
    <scope>VARIANT CDG1D ASP-118</scope>
    <scope>CHARACTERIZATION OF VARIANT CDG1D ASP-118</scope>
</reference>
<reference key="6">
    <citation type="journal article" date="2008" name="Mol. Cell">
        <title>Kinase-selective enrichment enables quantitative phosphoproteomics of the kinome across the cell cycle.</title>
        <authorList>
            <person name="Daub H."/>
            <person name="Olsen J.V."/>
            <person name="Bairlein M."/>
            <person name="Gnad F."/>
            <person name="Oppermann F.S."/>
            <person name="Korner R."/>
            <person name="Greff Z."/>
            <person name="Keri G."/>
            <person name="Stemmann O."/>
            <person name="Mann M."/>
        </authorList>
    </citation>
    <scope>IDENTIFICATION BY MASS SPECTROMETRY [LARGE SCALE ANALYSIS]</scope>
    <source>
        <tissue>Cervix carcinoma</tissue>
    </source>
</reference>
<reference key="7">
    <citation type="journal article" date="2008" name="Proc. Natl. Acad. Sci. U.S.A.">
        <title>A quantitative atlas of mitotic phosphorylation.</title>
        <authorList>
            <person name="Dephoure N."/>
            <person name="Zhou C."/>
            <person name="Villen J."/>
            <person name="Beausoleil S.A."/>
            <person name="Bakalarski C.E."/>
            <person name="Elledge S.J."/>
            <person name="Gygi S.P."/>
        </authorList>
    </citation>
    <scope>IDENTIFICATION BY MASS SPECTROMETRY [LARGE SCALE ANALYSIS]</scope>
    <source>
        <tissue>Cervix carcinoma</tissue>
    </source>
</reference>
<reference key="8">
    <citation type="journal article" date="2010" name="Sci. Signal.">
        <title>Quantitative phosphoproteomics reveals widespread full phosphorylation site occupancy during mitosis.</title>
        <authorList>
            <person name="Olsen J.V."/>
            <person name="Vermeulen M."/>
            <person name="Santamaria A."/>
            <person name="Kumar C."/>
            <person name="Miller M.L."/>
            <person name="Jensen L.J."/>
            <person name="Gnad F."/>
            <person name="Cox J."/>
            <person name="Jensen T.S."/>
            <person name="Nigg E.A."/>
            <person name="Brunak S."/>
            <person name="Mann M."/>
        </authorList>
    </citation>
    <scope>IDENTIFICATION BY MASS SPECTROMETRY [LARGE SCALE ANALYSIS]</scope>
    <source>
        <tissue>Cervix carcinoma</tissue>
    </source>
</reference>
<reference key="9">
    <citation type="journal article" date="2011" name="Sci. Signal.">
        <title>System-wide temporal characterization of the proteome and phosphoproteome of human embryonic stem cell differentiation.</title>
        <authorList>
            <person name="Rigbolt K.T."/>
            <person name="Prokhorova T.A."/>
            <person name="Akimov V."/>
            <person name="Henningsen J."/>
            <person name="Johansen P.T."/>
            <person name="Kratchmarova I."/>
            <person name="Kassem M."/>
            <person name="Mann M."/>
            <person name="Olsen J.V."/>
            <person name="Blagoev B."/>
        </authorList>
    </citation>
    <scope>IDENTIFICATION BY MASS SPECTROMETRY [LARGE SCALE ANALYSIS]</scope>
</reference>
<reference key="10">
    <citation type="journal article" date="2013" name="J. Proteome Res.">
        <title>Toward a comprehensive characterization of a human cancer cell phosphoproteome.</title>
        <authorList>
            <person name="Zhou H."/>
            <person name="Di Palma S."/>
            <person name="Preisinger C."/>
            <person name="Peng M."/>
            <person name="Polat A.N."/>
            <person name="Heck A.J."/>
            <person name="Mohammed S."/>
        </authorList>
    </citation>
    <scope>PHOSPHORYLATION [LARGE SCALE ANALYSIS] AT SER-13</scope>
    <scope>IDENTIFICATION BY MASS SPECTROMETRY [LARGE SCALE ANALYSIS]</scope>
    <source>
        <tissue>Cervix carcinoma</tissue>
        <tissue>Erythroleukemia</tissue>
    </source>
</reference>
<reference key="11">
    <citation type="journal article" date="2005" name="J. Clin. Endocrinol. Metab.">
        <title>Congenital disorder of glycosylation Id presenting with hyperinsulinemic hypoglycemia and islet cell hyperplasia.</title>
        <authorList>
            <person name="Sun L."/>
            <person name="Eklund E.A."/>
            <person name="Chung W.K."/>
            <person name="Wang C."/>
            <person name="Cohen J."/>
            <person name="Freeze H.H."/>
        </authorList>
    </citation>
    <scope>VARIANT CDG1D GLN-171</scope>
</reference>
<organism>
    <name type="scientific">Homo sapiens</name>
    <name type="common">Human</name>
    <dbReference type="NCBI Taxonomy" id="9606"/>
    <lineage>
        <taxon>Eukaryota</taxon>
        <taxon>Metazoa</taxon>
        <taxon>Chordata</taxon>
        <taxon>Craniata</taxon>
        <taxon>Vertebrata</taxon>
        <taxon>Euteleostomi</taxon>
        <taxon>Mammalia</taxon>
        <taxon>Eutheria</taxon>
        <taxon>Euarchontoglires</taxon>
        <taxon>Primates</taxon>
        <taxon>Haplorrhini</taxon>
        <taxon>Catarrhini</taxon>
        <taxon>Hominidae</taxon>
        <taxon>Homo</taxon>
    </lineage>
</organism>
<proteinExistence type="evidence at protein level"/>
<gene>
    <name evidence="8" type="primary">ALG3</name>
    <name type="synonym">NOT</name>
    <name type="synonym">NOT56L</name>
</gene>
<protein>
    <recommendedName>
        <fullName evidence="6">Dol-P-Man:Man(5)GlcNAc(2)-PP-Dol alpha-1,3-mannosyltransferase</fullName>
        <ecNumber evidence="2">2.4.1.258</ecNumber>
    </recommendedName>
    <alternativeName>
        <fullName evidence="8">Asparagine-linked glycosylation protein 3 homolog</fullName>
    </alternativeName>
    <alternativeName>
        <fullName>Dol-P-Man-dependent alpha(1-3)-mannosyltransferase</fullName>
    </alternativeName>
    <alternativeName>
        <fullName>Dolichyl-P-Man:Man(5)GlcNAc(2)-PP-dolichyl mannosyltransferase</fullName>
    </alternativeName>
    <alternativeName>
        <fullName>Dolichyl-phosphate-mannose--glycolipid alpha-mannosyltransferase</fullName>
    </alternativeName>
    <alternativeName>
        <fullName evidence="7">Not56-like protein</fullName>
    </alternativeName>
</protein>
<comment type="function">
    <text evidence="2">Dol-P-Man:Man(5)GlcNAc(2)-PP-Dol alpha-1,3-mannosyltransferase that operates in the biosynthetic pathway of dolichol-linked oligosaccharides, the glycan precursors employed in protein asparagine (N)-glycosylation. The assembly of dolichol-linked oligosaccharides begins on the cytosolic side of the endoplasmic reticulum membrane and finishes in its lumen. The sequential addition of sugars to dolichol pyrophosphate produces dolichol-linked oligosaccharides containing fourteen sugars, including two GlcNAcs, nine mannoses and three glucoses. Once assembled, the oligosaccharide is transferred from the lipid to nascent proteins by oligosaccharyltransferases. In the lumen of the endoplasmic reticulum, adds the first dolichyl beta-D-mannosyl phosphate derived mannose in an alpha-1,3 linkage to Man(5)GlcNAc(2)-PP-dolichol to produce Man(6)GlcNAc(2)-PP-dolichol (PubMed:10581255). Man(6)GlcNAc(2)-PP-dolichol is a substrate for ALG9, the following enzyme in the biosynthetic pathway (PubMed:10581255).</text>
</comment>
<comment type="catalytic activity">
    <reaction evidence="2">
        <text>an alpha-D-Man-(1-&gt;2)-alpha-D-Man-(1-&gt;2)-alpha-D-Man-(1-&gt;3)-[alpha-D-Man-(1-&gt;6)]-beta-D-Man-(1-&gt;4)-beta-D-GlcNAc-(1-&gt;4)-alpha-D-GlcNAc-diphospho-di-trans,poly-cis-dolichol + a di-trans,poly-cis-dolichyl beta-D-mannosyl phosphate = an alpha-D-Man-(1-&gt;2)-alpha-D-Man-(1-&gt;2)-alpha-D-Man-(1-&gt;3)-[alpha-D-Man-(1-&gt;3)-alpha-D-Man-(1-&gt;6)]-beta-D-Man-(1-&gt;4)-beta-D-GlcNAc-(1-&gt;4)-alpha-D-GlcNAc-diphospho-di-trans,poly-cis-dolichol + a di-trans,poly-cis-dolichyl phosphate + H(+)</text>
        <dbReference type="Rhea" id="RHEA:29527"/>
        <dbReference type="Rhea" id="RHEA-COMP:19498"/>
        <dbReference type="Rhea" id="RHEA-COMP:19501"/>
        <dbReference type="Rhea" id="RHEA-COMP:19516"/>
        <dbReference type="Rhea" id="RHEA-COMP:19517"/>
        <dbReference type="ChEBI" id="CHEBI:15378"/>
        <dbReference type="ChEBI" id="CHEBI:57683"/>
        <dbReference type="ChEBI" id="CHEBI:58211"/>
        <dbReference type="ChEBI" id="CHEBI:132515"/>
        <dbReference type="ChEBI" id="CHEBI:132516"/>
        <dbReference type="EC" id="2.4.1.258"/>
    </reaction>
    <physiologicalReaction direction="left-to-right" evidence="2">
        <dbReference type="Rhea" id="RHEA:29528"/>
    </physiologicalReaction>
</comment>
<comment type="pathway">
    <text evidence="2">Protein modification; protein glycosylation.</text>
</comment>
<comment type="interaction">
    <interactant intactId="EBI-2848814">
        <id>Q92685</id>
    </interactant>
    <interactant intactId="EBI-11343438">
        <id>Q3SXY8</id>
        <label>ARL13B</label>
    </interactant>
    <organismsDiffer>false</organismsDiffer>
    <experiments>3</experiments>
</comment>
<comment type="interaction">
    <interactant intactId="EBI-2848814">
        <id>Q92685</id>
    </interactant>
    <interactant intactId="EBI-7797864">
        <id>P11912</id>
        <label>CD79A</label>
    </interactant>
    <organismsDiffer>false</organismsDiffer>
    <experiments>3</experiments>
</comment>
<comment type="interaction">
    <interactant intactId="EBI-2848814">
        <id>Q92685</id>
    </interactant>
    <interactant intactId="EBI-625002">
        <id>O43889</id>
        <label>CREB3</label>
    </interactant>
    <organismsDiffer>false</organismsDiffer>
    <experiments>4</experiments>
</comment>
<comment type="interaction">
    <interactant intactId="EBI-2848814">
        <id>Q92685</id>
    </interactant>
    <interactant intactId="EBI-625022">
        <id>O43889-2</id>
        <label>CREB3</label>
    </interactant>
    <organismsDiffer>false</organismsDiffer>
    <experiments>4</experiments>
</comment>
<comment type="interaction">
    <interactant intactId="EBI-2848814">
        <id>Q92685</id>
    </interactant>
    <interactant intactId="EBI-1046087">
        <id>Q07954</id>
        <label>LRP1</label>
    </interactant>
    <organismsDiffer>false</organismsDiffer>
    <experiments>2</experiments>
</comment>
<comment type="interaction">
    <interactant intactId="EBI-2848814">
        <id>Q92685</id>
    </interactant>
    <interactant intactId="EBI-2681902">
        <id>P22059</id>
        <label>OSBP</label>
    </interactant>
    <organismsDiffer>false</organismsDiffer>
    <experiments>2</experiments>
</comment>
<comment type="interaction">
    <interactant intactId="EBI-2848814">
        <id>Q92685</id>
    </interactant>
    <interactant intactId="EBI-2511368">
        <id>Q96SU4</id>
        <label>OSBPL9</label>
    </interactant>
    <organismsDiffer>false</organismsDiffer>
    <experiments>2</experiments>
</comment>
<comment type="interaction">
    <interactant intactId="EBI-2848814">
        <id>Q92685</id>
    </interactant>
    <interactant intactId="EBI-10329948">
        <id>Q9Y6X1</id>
        <label>SERP1</label>
    </interactant>
    <organismsDiffer>false</organismsDiffer>
    <experiments>3</experiments>
</comment>
<comment type="interaction">
    <interactant intactId="EBI-2848814">
        <id>Q92685</id>
    </interactant>
    <interactant intactId="EBI-17280858">
        <id>Q8WWF3</id>
        <label>SSMEM1</label>
    </interactant>
    <organismsDiffer>false</organismsDiffer>
    <experiments>3</experiments>
</comment>
<comment type="interaction">
    <interactant intactId="EBI-2848814">
        <id>Q92685</id>
    </interactant>
    <interactant intactId="EBI-2800683">
        <id>Q16563</id>
        <label>SYPL1</label>
    </interactant>
    <organismsDiffer>false</organismsDiffer>
    <experiments>3</experiments>
</comment>
<comment type="interaction">
    <interactant intactId="EBI-2848814">
        <id>Q92685</id>
    </interactant>
    <interactant intactId="EBI-18178701">
        <id>Q4KMG9</id>
        <label>TMEM52B</label>
    </interactant>
    <organismsDiffer>false</organismsDiffer>
    <experiments>3</experiments>
</comment>
<comment type="subcellular location">
    <subcellularLocation>
        <location evidence="6">Endoplasmic reticulum membrane</location>
        <topology evidence="1">Multi-pass membrane protein</topology>
    </subcellularLocation>
</comment>
<comment type="alternative products">
    <event type="alternative splicing"/>
    <isoform>
        <id>Q92685-1</id>
        <name>1</name>
        <sequence type="displayed"/>
    </isoform>
    <isoform>
        <id>Q92685-2</id>
        <name>2</name>
        <sequence type="described" ref="VSP_042738"/>
    </isoform>
</comment>
<comment type="disease" evidence="2 3">
    <disease id="DI-00336">
        <name>Congenital disorder of glycosylation 1D</name>
        <acronym>CDG1D</acronym>
        <description>A form of congenital disorder of glycosylation, a multisystem disorder caused by a defect in glycoprotein biosynthesis and characterized by under-glycosylated serum glycoproteins. Congenital disorders of glycosylation result in a wide variety of clinical features, such as defects in the nervous system development, psychomotor retardation, dysmorphic features, hypotonia, coagulation disorders, and immunodeficiency. The broad spectrum of features reflects the critical role of N-glycoproteins during embryonic development, differentiation, and maintenance of cell functions.</description>
        <dbReference type="MIM" id="601110"/>
    </disease>
    <text>The disease is caused by variants affecting the gene represented in this entry.</text>
</comment>
<comment type="similarity">
    <text evidence="5">Belongs to the glycosyltransferase ALG3 family.</text>
</comment>